<accession>A9MZM6</accession>
<dbReference type="EMBL" id="CP000886">
    <property type="protein sequence ID" value="ABX65611.1"/>
    <property type="molecule type" value="Genomic_DNA"/>
</dbReference>
<dbReference type="RefSeq" id="WP_000014336.1">
    <property type="nucleotide sequence ID" value="NC_010102.1"/>
</dbReference>
<dbReference type="SMR" id="A9MZM6"/>
<dbReference type="KEGG" id="spq:SPAB_00169"/>
<dbReference type="PATRIC" id="fig|1016998.12.peg.161"/>
<dbReference type="HOGENOM" id="CLU_108853_0_0_6"/>
<dbReference type="Proteomes" id="UP000008556">
    <property type="component" value="Chromosome"/>
</dbReference>
<dbReference type="GO" id="GO:0005829">
    <property type="term" value="C:cytosol"/>
    <property type="evidence" value="ECO:0007669"/>
    <property type="project" value="UniProtKB-SubCell"/>
</dbReference>
<dbReference type="GO" id="GO:0042597">
    <property type="term" value="C:periplasmic space"/>
    <property type="evidence" value="ECO:0007669"/>
    <property type="project" value="UniProtKB-SubCell"/>
</dbReference>
<dbReference type="GO" id="GO:0045182">
    <property type="term" value="F:translation regulator activity"/>
    <property type="evidence" value="ECO:0007669"/>
    <property type="project" value="InterPro"/>
</dbReference>
<dbReference type="HAMAP" id="MF_01332">
    <property type="entry name" value="SecM"/>
    <property type="match status" value="1"/>
</dbReference>
<dbReference type="InterPro" id="IPR009502">
    <property type="entry name" value="SecM"/>
</dbReference>
<dbReference type="NCBIfam" id="NF002799">
    <property type="entry name" value="PRK02943.1-1"/>
    <property type="match status" value="1"/>
</dbReference>
<dbReference type="Pfam" id="PF06558">
    <property type="entry name" value="SecM"/>
    <property type="match status" value="1"/>
</dbReference>
<dbReference type="PIRSF" id="PIRSF004572">
    <property type="entry name" value="SecM"/>
    <property type="match status" value="1"/>
</dbReference>
<reference key="1">
    <citation type="submission" date="2007-11" db="EMBL/GenBank/DDBJ databases">
        <authorList>
            <consortium name="The Salmonella enterica serovar Paratyphi B Genome Sequencing Project"/>
            <person name="McClelland M."/>
            <person name="Sanderson E.K."/>
            <person name="Porwollik S."/>
            <person name="Spieth J."/>
            <person name="Clifton W.S."/>
            <person name="Fulton R."/>
            <person name="Cordes M."/>
            <person name="Wollam A."/>
            <person name="Shah N."/>
            <person name="Pepin K."/>
            <person name="Bhonagiri V."/>
            <person name="Nash W."/>
            <person name="Johnson M."/>
            <person name="Thiruvilangam P."/>
            <person name="Wilson R."/>
        </authorList>
    </citation>
    <scope>NUCLEOTIDE SEQUENCE [LARGE SCALE GENOMIC DNA]</scope>
    <source>
        <strain>ATCC BAA-1250 / SPB7</strain>
    </source>
</reference>
<keyword id="KW-0963">Cytoplasm</keyword>
<keyword id="KW-0574">Periplasm</keyword>
<keyword id="KW-0732">Signal</keyword>
<gene>
    <name evidence="1" type="primary">secM</name>
    <name type="ordered locus">SPAB_00169</name>
</gene>
<evidence type="ECO:0000255" key="1">
    <source>
        <dbReference type="HAMAP-Rule" id="MF_01332"/>
    </source>
</evidence>
<sequence length="165" mass="18117">MSGILTRWRQLGRRYFWPHLLLGMVAASFGLPALSNAAETNTPARTTASTASKVNFSHLALLEASNRRPNFTVDYWHQHAIRTVIRHLSFAMAPQTLPVADAPSPLQAHHIALLNTLSAMLTQEGTPPAIVRRLSLAYFAPQTAFSIPAWISQAQGIRAGPQRLS</sequence>
<protein>
    <recommendedName>
        <fullName evidence="1">Secretion monitor</fullName>
    </recommendedName>
</protein>
<comment type="function">
    <text evidence="1">Regulates secA expression by translational coupling of the secM secA operon. Translational pausing at a specific Pro residue 5 residues before the end of the protein may allow disruption of a mRNA repressor helix that normally suppresses secA translation initiation.</text>
</comment>
<comment type="subcellular location">
    <subcellularLocation>
        <location evidence="1">Cytoplasm</location>
        <location evidence="1">Cytosol</location>
    </subcellularLocation>
    <subcellularLocation>
        <location evidence="1">Periplasm</location>
    </subcellularLocation>
    <text evidence="1">The active form is cytosolic, while the periplasmic form is rapidly degraded, mainly by the tail-specific protease.</text>
</comment>
<comment type="similarity">
    <text evidence="1">Belongs to the SecM family.</text>
</comment>
<name>SECM_SALPB</name>
<organism>
    <name type="scientific">Salmonella paratyphi B (strain ATCC BAA-1250 / SPB7)</name>
    <dbReference type="NCBI Taxonomy" id="1016998"/>
    <lineage>
        <taxon>Bacteria</taxon>
        <taxon>Pseudomonadati</taxon>
        <taxon>Pseudomonadota</taxon>
        <taxon>Gammaproteobacteria</taxon>
        <taxon>Enterobacterales</taxon>
        <taxon>Enterobacteriaceae</taxon>
        <taxon>Salmonella</taxon>
    </lineage>
</organism>
<proteinExistence type="inferred from homology"/>
<feature type="signal peptide" evidence="1">
    <location>
        <begin position="1"/>
        <end position="37"/>
    </location>
</feature>
<feature type="chain" id="PRO_1000086576" description="Secretion monitor">
    <location>
        <begin position="38"/>
        <end position="165"/>
    </location>
</feature>